<keyword id="KW-0150">Chloroplast</keyword>
<keyword id="KW-0472">Membrane</keyword>
<keyword id="KW-0602">Photosynthesis</keyword>
<keyword id="KW-0604">Photosystem II</keyword>
<keyword id="KW-0934">Plastid</keyword>
<keyword id="KW-0674">Reaction center</keyword>
<keyword id="KW-0793">Thylakoid</keyword>
<keyword id="KW-0812">Transmembrane</keyword>
<keyword id="KW-1133">Transmembrane helix</keyword>
<name>PSBM_STIHE</name>
<comment type="function">
    <text evidence="1">One of the components of the core complex of photosystem II (PSII). PSII is a light-driven water:plastoquinone oxidoreductase that uses light energy to abstract electrons from H(2)O, generating O(2) and a proton gradient subsequently used for ATP formation. It consists of a core antenna complex that captures photons, and an electron transfer chain that converts photonic excitation into a charge separation. This subunit is found at the monomer-monomer interface.</text>
</comment>
<comment type="subunit">
    <text evidence="1">PSII is composed of 1 copy each of membrane proteins PsbA, PsbB, PsbC, PsbD, PsbE, PsbF, PsbH, PsbI, PsbJ, PsbK, PsbL, PsbM, PsbT, PsbX, PsbY, PsbZ, Psb30/Ycf12, at least 3 peripheral proteins of the oxygen-evolving complex and a large number of cofactors. It forms dimeric complexes.</text>
</comment>
<comment type="subcellular location">
    <subcellularLocation>
        <location evidence="1">Plastid</location>
        <location evidence="1">Chloroplast thylakoid membrane</location>
        <topology evidence="1">Single-pass membrane protein</topology>
    </subcellularLocation>
</comment>
<comment type="similarity">
    <text evidence="1">Belongs to the PsbM family.</text>
</comment>
<protein>
    <recommendedName>
        <fullName evidence="1">Photosystem II reaction center protein M</fullName>
        <shortName evidence="1">PSII-M</shortName>
    </recommendedName>
</protein>
<geneLocation type="chloroplast"/>
<reference key="1">
    <citation type="journal article" date="2006" name="Mol. Genet. Genomics">
        <title>Distinctive architecture of the chloroplast genome in the chlorophycean green alga Stigeoclonium helveticum.</title>
        <authorList>
            <person name="Belanger A.-S."/>
            <person name="Brouard J.-S."/>
            <person name="Charlebois P."/>
            <person name="Otis C."/>
            <person name="Lemieux C."/>
            <person name="Turmel M."/>
        </authorList>
    </citation>
    <scope>NUCLEOTIDE SEQUENCE [LARGE SCALE GENOMIC DNA]</scope>
    <source>
        <strain>UTEX 441</strain>
    </source>
</reference>
<dbReference type="EMBL" id="DQ630521">
    <property type="protein sequence ID" value="ABF60177.1"/>
    <property type="molecule type" value="Genomic_DNA"/>
</dbReference>
<dbReference type="RefSeq" id="YP_764420.1">
    <property type="nucleotide sequence ID" value="NC_008372.1"/>
</dbReference>
<dbReference type="SMR" id="Q06SE6"/>
<dbReference type="GeneID" id="4308420"/>
<dbReference type="GO" id="GO:0009535">
    <property type="term" value="C:chloroplast thylakoid membrane"/>
    <property type="evidence" value="ECO:0007669"/>
    <property type="project" value="UniProtKB-SubCell"/>
</dbReference>
<dbReference type="GO" id="GO:0009523">
    <property type="term" value="C:photosystem II"/>
    <property type="evidence" value="ECO:0007669"/>
    <property type="project" value="UniProtKB-KW"/>
</dbReference>
<dbReference type="GO" id="GO:0019684">
    <property type="term" value="P:photosynthesis, light reaction"/>
    <property type="evidence" value="ECO:0007669"/>
    <property type="project" value="InterPro"/>
</dbReference>
<dbReference type="HAMAP" id="MF_00438">
    <property type="entry name" value="PSII_PsbM"/>
    <property type="match status" value="1"/>
</dbReference>
<dbReference type="InterPro" id="IPR007826">
    <property type="entry name" value="PSII_PsbM"/>
</dbReference>
<dbReference type="InterPro" id="IPR037269">
    <property type="entry name" value="PSII_PsbM_sf"/>
</dbReference>
<dbReference type="NCBIfam" id="TIGR03038">
    <property type="entry name" value="PS_II_psbM"/>
    <property type="match status" value="1"/>
</dbReference>
<dbReference type="PANTHER" id="PTHR35774">
    <property type="entry name" value="PHOTOSYSTEM II REACTION CENTER PROTEIN M"/>
    <property type="match status" value="1"/>
</dbReference>
<dbReference type="PANTHER" id="PTHR35774:SF1">
    <property type="entry name" value="PHOTOSYSTEM II REACTION CENTER PROTEIN M"/>
    <property type="match status" value="1"/>
</dbReference>
<dbReference type="Pfam" id="PF05151">
    <property type="entry name" value="PsbM"/>
    <property type="match status" value="1"/>
</dbReference>
<dbReference type="SUPFAM" id="SSF161033">
    <property type="entry name" value="Photosystem II reaction center protein M, PsbM"/>
    <property type="match status" value="1"/>
</dbReference>
<gene>
    <name evidence="1" type="primary">psbM</name>
</gene>
<sequence>MEVNILGLTATALFIIIPTSFLLILYVKTASNEA</sequence>
<feature type="chain" id="PRO_0000276260" description="Photosystem II reaction center protein M">
    <location>
        <begin position="1"/>
        <end position="34"/>
    </location>
</feature>
<feature type="transmembrane region" description="Helical" evidence="1">
    <location>
        <begin position="5"/>
        <end position="25"/>
    </location>
</feature>
<accession>Q06SE6</accession>
<proteinExistence type="inferred from homology"/>
<organism>
    <name type="scientific">Stigeoclonium helveticum</name>
    <name type="common">Green alga</name>
    <dbReference type="NCBI Taxonomy" id="55999"/>
    <lineage>
        <taxon>Eukaryota</taxon>
        <taxon>Viridiplantae</taxon>
        <taxon>Chlorophyta</taxon>
        <taxon>core chlorophytes</taxon>
        <taxon>Chlorophyceae</taxon>
        <taxon>OCC clade</taxon>
        <taxon>Chaetophorales</taxon>
        <taxon>Chaetophoraceae</taxon>
        <taxon>Stigeoclonium</taxon>
    </lineage>
</organism>
<evidence type="ECO:0000255" key="1">
    <source>
        <dbReference type="HAMAP-Rule" id="MF_00438"/>
    </source>
</evidence>